<geneLocation type="plasmid">
    <name>IncFI ColV3-K30</name>
</geneLocation>
<comment type="function">
    <text>This protein is able to protect a cell, which harbors the plasmid ColV encoding colicin V, against colicin V.</text>
</comment>
<accession>P22521</accession>
<accession>O70102</accession>
<reference key="1">
    <citation type="journal article" date="1990" name="EMBO J.">
        <title>Genetic analysis of an MDR-like export system: the secretion of colicin V.</title>
        <authorList>
            <person name="Gilson L."/>
            <person name="Mahanty H.K."/>
            <person name="Kolter R."/>
        </authorList>
    </citation>
    <scope>NUCLEOTIDE SEQUENCE [GENOMIC DNA]</scope>
</reference>
<reference key="2">
    <citation type="submission" date="1998-05" db="EMBL/GenBank/DDBJ databases">
        <authorList>
            <person name="Pinou T."/>
            <person name="Riley M.A."/>
        </authorList>
    </citation>
    <scope>NUCLEOTIDE SEQUENCE [GENOMIC DNA]</scope>
    <source>
        <strain>Various strains</strain>
    </source>
</reference>
<reference key="3">
    <citation type="journal article" date="1998" name="J. Exp. Med.">
        <title>Characterization of a hemoglobin protease secreted by the pathogenic Escherichia coli strain EB1.</title>
        <authorList>
            <person name="Otto B.R."/>
            <person name="van Dooren S.J.M."/>
            <person name="Nuijens J.H."/>
            <person name="Luirink J."/>
            <person name="Oudega B."/>
        </authorList>
    </citation>
    <scope>NUCLEOTIDE SEQUENCE [GENOMIC DNA]</scope>
</reference>
<name>IMMV_ECOLX</name>
<dbReference type="EMBL" id="X57525">
    <property type="protein sequence ID" value="CAA40745.1"/>
    <property type="molecule type" value="Genomic_DNA"/>
</dbReference>
<dbReference type="EMBL" id="AF062844">
    <property type="protein sequence ID" value="AAC16350.1"/>
    <property type="molecule type" value="Genomic_DNA"/>
</dbReference>
<dbReference type="EMBL" id="AF062845">
    <property type="protein sequence ID" value="AAC16352.1"/>
    <property type="molecule type" value="Genomic_DNA"/>
</dbReference>
<dbReference type="EMBL" id="AF062846">
    <property type="protein sequence ID" value="AAC16354.1"/>
    <property type="molecule type" value="Genomic_DNA"/>
</dbReference>
<dbReference type="EMBL" id="AF062847">
    <property type="protein sequence ID" value="AAC16356.1"/>
    <property type="molecule type" value="Genomic_DNA"/>
</dbReference>
<dbReference type="EMBL" id="AF062848">
    <property type="protein sequence ID" value="AAC16358.1"/>
    <property type="molecule type" value="Genomic_DNA"/>
</dbReference>
<dbReference type="EMBL" id="AF062849">
    <property type="protein sequence ID" value="AAC16360.1"/>
    <property type="molecule type" value="Genomic_DNA"/>
</dbReference>
<dbReference type="EMBL" id="AF062850">
    <property type="protein sequence ID" value="AAC16362.1"/>
    <property type="molecule type" value="Genomic_DNA"/>
</dbReference>
<dbReference type="EMBL" id="AF062851">
    <property type="protein sequence ID" value="AAC16364.1"/>
    <property type="molecule type" value="Genomic_DNA"/>
</dbReference>
<dbReference type="EMBL" id="AF062852">
    <property type="protein sequence ID" value="AAC16366.1"/>
    <property type="molecule type" value="Genomic_DNA"/>
</dbReference>
<dbReference type="EMBL" id="AF062853">
    <property type="protein sequence ID" value="AAC16368.1"/>
    <property type="molecule type" value="Genomic_DNA"/>
</dbReference>
<dbReference type="EMBL" id="AF062854">
    <property type="protein sequence ID" value="AAC16370.1"/>
    <property type="molecule type" value="Genomic_DNA"/>
</dbReference>
<dbReference type="EMBL" id="AF062855">
    <property type="protein sequence ID" value="AAC16372.1"/>
    <property type="molecule type" value="Genomic_DNA"/>
</dbReference>
<dbReference type="EMBL" id="AF062856">
    <property type="protein sequence ID" value="AAC16374.1"/>
    <property type="molecule type" value="Genomic_DNA"/>
</dbReference>
<dbReference type="EMBL" id="AF062857">
    <property type="protein sequence ID" value="AAC16376.1"/>
    <property type="molecule type" value="Genomic_DNA"/>
</dbReference>
<dbReference type="EMBL" id="AF062858">
    <property type="protein sequence ID" value="AAC16378.1"/>
    <property type="molecule type" value="Genomic_DNA"/>
</dbReference>
<dbReference type="EMBL" id="AJ223631">
    <property type="protein sequence ID" value="CAA11513.1"/>
    <property type="molecule type" value="Genomic_DNA"/>
</dbReference>
<dbReference type="PIR" id="S12273">
    <property type="entry name" value="IKEC5I"/>
</dbReference>
<dbReference type="RefSeq" id="WP_001323890.1">
    <property type="nucleotide sequence ID" value="NZ_WXYX01000007.1"/>
</dbReference>
<dbReference type="RefSeq" id="WP_014640552.1">
    <property type="nucleotide sequence ID" value="NZ_WXYY01000004.1"/>
</dbReference>
<dbReference type="RefSeq" id="YP_009070744.1">
    <property type="nucleotide sequence ID" value="NC_025175.1"/>
</dbReference>
<dbReference type="RefSeq" id="YP_444121.1">
    <property type="nucleotide sequence ID" value="NC_007675.1"/>
</dbReference>
<dbReference type="GO" id="GO:0030153">
    <property type="term" value="P:bacteriocin immunity"/>
    <property type="evidence" value="ECO:0007669"/>
    <property type="project" value="UniProtKB-KW"/>
</dbReference>
<protein>
    <recommendedName>
        <fullName>Colicin-V immunity protein</fullName>
    </recommendedName>
    <alternativeName>
        <fullName>Microcin-V immunity protein</fullName>
    </alternativeName>
</protein>
<keyword id="KW-0079">Bacteriocin immunity</keyword>
<keyword id="KW-0614">Plasmid</keyword>
<gene>
    <name type="primary">cvi</name>
</gene>
<sequence>MDRKRTKLELLFAFIINATAIYIALAIYDCVFRGKDFLSMHTFCFSALMSAICYFVGDNYYSISDKIKRRSYENSDSK</sequence>
<proteinExistence type="predicted"/>
<organism>
    <name type="scientific">Escherichia coli</name>
    <dbReference type="NCBI Taxonomy" id="562"/>
    <lineage>
        <taxon>Bacteria</taxon>
        <taxon>Pseudomonadati</taxon>
        <taxon>Pseudomonadota</taxon>
        <taxon>Gammaproteobacteria</taxon>
        <taxon>Enterobacterales</taxon>
        <taxon>Enterobacteriaceae</taxon>
        <taxon>Escherichia</taxon>
    </lineage>
</organism>
<feature type="chain" id="PRO_0000218699" description="Colicin-V immunity protein">
    <location>
        <begin position="1"/>
        <end position="78"/>
    </location>
</feature>
<feature type="sequence variant" description="In strain: 910-L8, 910-16, 976-L5, 976-L14, 1054-S11 and PCOLVCA7V.">
    <original>A</original>
    <variation>I</variation>
    <location>
        <position position="47"/>
    </location>
</feature>